<proteinExistence type="inferred from homology"/>
<accession>Q8DMM1</accession>
<comment type="function">
    <text evidence="1">One of two assembly initiator proteins, it binds directly to the 5'-end of the 23S rRNA, where it nucleates assembly of the 50S subunit.</text>
</comment>
<comment type="function">
    <text evidence="1">One of the proteins that surrounds the polypeptide exit tunnel on the outside of the subunit.</text>
</comment>
<comment type="subunit">
    <text evidence="1">Part of the 50S ribosomal subunit.</text>
</comment>
<comment type="similarity">
    <text evidence="1">Belongs to the universal ribosomal protein uL24 family.</text>
</comment>
<feature type="chain" id="PRO_0000130735" description="Large ribosomal subunit protein uL24">
    <location>
        <begin position="1"/>
        <end position="117"/>
    </location>
</feature>
<organism>
    <name type="scientific">Thermosynechococcus vestitus (strain NIES-2133 / IAM M-273 / BP-1)</name>
    <dbReference type="NCBI Taxonomy" id="197221"/>
    <lineage>
        <taxon>Bacteria</taxon>
        <taxon>Bacillati</taxon>
        <taxon>Cyanobacteriota</taxon>
        <taxon>Cyanophyceae</taxon>
        <taxon>Acaryochloridales</taxon>
        <taxon>Thermosynechococcaceae</taxon>
        <taxon>Thermosynechococcus</taxon>
    </lineage>
</organism>
<evidence type="ECO:0000255" key="1">
    <source>
        <dbReference type="HAMAP-Rule" id="MF_01326"/>
    </source>
</evidence>
<evidence type="ECO:0000305" key="2"/>
<name>RL24_THEVB</name>
<dbReference type="EMBL" id="BA000039">
    <property type="protein sequence ID" value="BAC07645.1"/>
    <property type="molecule type" value="Genomic_DNA"/>
</dbReference>
<dbReference type="RefSeq" id="NP_680883.1">
    <property type="nucleotide sequence ID" value="NC_004113.1"/>
</dbReference>
<dbReference type="RefSeq" id="WP_011055947.1">
    <property type="nucleotide sequence ID" value="NC_004113.1"/>
</dbReference>
<dbReference type="SMR" id="Q8DMM1"/>
<dbReference type="STRING" id="197221.gene:10746670"/>
<dbReference type="EnsemblBacteria" id="BAC07645">
    <property type="protein sequence ID" value="BAC07645"/>
    <property type="gene ID" value="BAC07645"/>
</dbReference>
<dbReference type="KEGG" id="tel:tlr0092"/>
<dbReference type="PATRIC" id="fig|197221.4.peg.95"/>
<dbReference type="eggNOG" id="COG0198">
    <property type="taxonomic scope" value="Bacteria"/>
</dbReference>
<dbReference type="Proteomes" id="UP000000440">
    <property type="component" value="Chromosome"/>
</dbReference>
<dbReference type="GO" id="GO:1990904">
    <property type="term" value="C:ribonucleoprotein complex"/>
    <property type="evidence" value="ECO:0007669"/>
    <property type="project" value="UniProtKB-KW"/>
</dbReference>
<dbReference type="GO" id="GO:0005840">
    <property type="term" value="C:ribosome"/>
    <property type="evidence" value="ECO:0007669"/>
    <property type="project" value="UniProtKB-KW"/>
</dbReference>
<dbReference type="GO" id="GO:0019843">
    <property type="term" value="F:rRNA binding"/>
    <property type="evidence" value="ECO:0007669"/>
    <property type="project" value="UniProtKB-UniRule"/>
</dbReference>
<dbReference type="GO" id="GO:0003735">
    <property type="term" value="F:structural constituent of ribosome"/>
    <property type="evidence" value="ECO:0007669"/>
    <property type="project" value="InterPro"/>
</dbReference>
<dbReference type="GO" id="GO:0006412">
    <property type="term" value="P:translation"/>
    <property type="evidence" value="ECO:0007669"/>
    <property type="project" value="UniProtKB-UniRule"/>
</dbReference>
<dbReference type="CDD" id="cd06089">
    <property type="entry name" value="KOW_RPL26"/>
    <property type="match status" value="1"/>
</dbReference>
<dbReference type="FunFam" id="2.30.30.30:FF:000004">
    <property type="entry name" value="50S ribosomal protein L24"/>
    <property type="match status" value="1"/>
</dbReference>
<dbReference type="Gene3D" id="2.30.30.30">
    <property type="match status" value="1"/>
</dbReference>
<dbReference type="HAMAP" id="MF_01326_B">
    <property type="entry name" value="Ribosomal_uL24_B"/>
    <property type="match status" value="1"/>
</dbReference>
<dbReference type="InterPro" id="IPR005824">
    <property type="entry name" value="KOW"/>
</dbReference>
<dbReference type="InterPro" id="IPR014722">
    <property type="entry name" value="Rib_uL2_dom2"/>
</dbReference>
<dbReference type="InterPro" id="IPR003256">
    <property type="entry name" value="Ribosomal_uL24"/>
</dbReference>
<dbReference type="InterPro" id="IPR041988">
    <property type="entry name" value="Ribosomal_uL24_KOW"/>
</dbReference>
<dbReference type="InterPro" id="IPR008991">
    <property type="entry name" value="Translation_prot_SH3-like_sf"/>
</dbReference>
<dbReference type="NCBIfam" id="TIGR01079">
    <property type="entry name" value="rplX_bact"/>
    <property type="match status" value="1"/>
</dbReference>
<dbReference type="PANTHER" id="PTHR12903">
    <property type="entry name" value="MITOCHONDRIAL RIBOSOMAL PROTEIN L24"/>
    <property type="match status" value="1"/>
</dbReference>
<dbReference type="Pfam" id="PF00467">
    <property type="entry name" value="KOW"/>
    <property type="match status" value="1"/>
</dbReference>
<dbReference type="Pfam" id="PF17136">
    <property type="entry name" value="ribosomal_L24"/>
    <property type="match status" value="1"/>
</dbReference>
<dbReference type="SMART" id="SM00739">
    <property type="entry name" value="KOW"/>
    <property type="match status" value="1"/>
</dbReference>
<dbReference type="SUPFAM" id="SSF50104">
    <property type="entry name" value="Translation proteins SH3-like domain"/>
    <property type="match status" value="1"/>
</dbReference>
<sequence length="117" mass="13055">MAAKKANKKPVRYRMHVKKGDTVQVIAGSDKAKVGEVLAVFPKTSQVIVKGVNLKTKHLKPRQEGESGQIITKEAPIHSCKVMLYSTKQNVASRICYTYTEDGRKVRMLKKTGEIID</sequence>
<keyword id="KW-1185">Reference proteome</keyword>
<keyword id="KW-0687">Ribonucleoprotein</keyword>
<keyword id="KW-0689">Ribosomal protein</keyword>
<keyword id="KW-0694">RNA-binding</keyword>
<keyword id="KW-0699">rRNA-binding</keyword>
<protein>
    <recommendedName>
        <fullName evidence="1">Large ribosomal subunit protein uL24</fullName>
    </recommendedName>
    <alternativeName>
        <fullName evidence="2">50S ribosomal protein L24</fullName>
    </alternativeName>
</protein>
<reference key="1">
    <citation type="journal article" date="2002" name="DNA Res.">
        <title>Complete genome structure of the thermophilic cyanobacterium Thermosynechococcus elongatus BP-1.</title>
        <authorList>
            <person name="Nakamura Y."/>
            <person name="Kaneko T."/>
            <person name="Sato S."/>
            <person name="Ikeuchi M."/>
            <person name="Katoh H."/>
            <person name="Sasamoto S."/>
            <person name="Watanabe A."/>
            <person name="Iriguchi M."/>
            <person name="Kawashima K."/>
            <person name="Kimura T."/>
            <person name="Kishida Y."/>
            <person name="Kiyokawa C."/>
            <person name="Kohara M."/>
            <person name="Matsumoto M."/>
            <person name="Matsuno A."/>
            <person name="Nakazaki N."/>
            <person name="Shimpo S."/>
            <person name="Sugimoto M."/>
            <person name="Takeuchi C."/>
            <person name="Yamada M."/>
            <person name="Tabata S."/>
        </authorList>
    </citation>
    <scope>NUCLEOTIDE SEQUENCE [LARGE SCALE GENOMIC DNA]</scope>
    <source>
        <strain>NIES-2133 / IAM M-273 / BP-1</strain>
    </source>
</reference>
<gene>
    <name evidence="1" type="primary">rplX</name>
    <name evidence="1" type="synonym">rpl24</name>
    <name type="ordered locus">tlr0092</name>
</gene>